<comment type="function">
    <text evidence="1">Catalyzes the synthesis of the hydroxymethylpyrimidine phosphate (HMP-P) moiety of thiamine from aminoimidazole ribotide (AIR) in a radical S-adenosyl-L-methionine (SAM)-dependent reaction.</text>
</comment>
<comment type="catalytic activity">
    <reaction evidence="1">
        <text>5-amino-1-(5-phospho-beta-D-ribosyl)imidazole + S-adenosyl-L-methionine = 4-amino-2-methyl-5-(phosphooxymethyl)pyrimidine + CO + 5'-deoxyadenosine + formate + L-methionine + 3 H(+)</text>
        <dbReference type="Rhea" id="RHEA:24840"/>
        <dbReference type="ChEBI" id="CHEBI:15378"/>
        <dbReference type="ChEBI" id="CHEBI:15740"/>
        <dbReference type="ChEBI" id="CHEBI:17245"/>
        <dbReference type="ChEBI" id="CHEBI:17319"/>
        <dbReference type="ChEBI" id="CHEBI:57844"/>
        <dbReference type="ChEBI" id="CHEBI:58354"/>
        <dbReference type="ChEBI" id="CHEBI:59789"/>
        <dbReference type="ChEBI" id="CHEBI:137981"/>
        <dbReference type="EC" id="4.1.99.17"/>
    </reaction>
</comment>
<comment type="cofactor">
    <cofactor evidence="1">
        <name>[4Fe-4S] cluster</name>
        <dbReference type="ChEBI" id="CHEBI:49883"/>
    </cofactor>
    <text evidence="1">Binds 1 [4Fe-4S] cluster per subunit. The cluster is coordinated with 3 cysteines and an exchangeable S-adenosyl-L-methionine.</text>
</comment>
<comment type="pathway">
    <text evidence="1">Cofactor biosynthesis; thiamine diphosphate biosynthesis.</text>
</comment>
<comment type="similarity">
    <text evidence="1">Belongs to the ThiC family.</text>
</comment>
<accession>Q6HB59</accession>
<reference key="1">
    <citation type="journal article" date="2006" name="J. Bacteriol.">
        <title>Pathogenomic sequence analysis of Bacillus cereus and Bacillus thuringiensis isolates closely related to Bacillus anthracis.</title>
        <authorList>
            <person name="Han C.S."/>
            <person name="Xie G."/>
            <person name="Challacombe J.F."/>
            <person name="Altherr M.R."/>
            <person name="Bhotika S.S."/>
            <person name="Bruce D."/>
            <person name="Campbell C.S."/>
            <person name="Campbell M.L."/>
            <person name="Chen J."/>
            <person name="Chertkov O."/>
            <person name="Cleland C."/>
            <person name="Dimitrijevic M."/>
            <person name="Doggett N.A."/>
            <person name="Fawcett J.J."/>
            <person name="Glavina T."/>
            <person name="Goodwin L.A."/>
            <person name="Hill K.K."/>
            <person name="Hitchcock P."/>
            <person name="Jackson P.J."/>
            <person name="Keim P."/>
            <person name="Kewalramani A.R."/>
            <person name="Longmire J."/>
            <person name="Lucas S."/>
            <person name="Malfatti S."/>
            <person name="McMurry K."/>
            <person name="Meincke L.J."/>
            <person name="Misra M."/>
            <person name="Moseman B.L."/>
            <person name="Mundt M."/>
            <person name="Munk A.C."/>
            <person name="Okinaka R.T."/>
            <person name="Parson-Quintana B."/>
            <person name="Reilly L.P."/>
            <person name="Richardson P."/>
            <person name="Robinson D.L."/>
            <person name="Rubin E."/>
            <person name="Saunders E."/>
            <person name="Tapia R."/>
            <person name="Tesmer J.G."/>
            <person name="Thayer N."/>
            <person name="Thompson L.S."/>
            <person name="Tice H."/>
            <person name="Ticknor L.O."/>
            <person name="Wills P.L."/>
            <person name="Brettin T.S."/>
            <person name="Gilna P."/>
        </authorList>
    </citation>
    <scope>NUCLEOTIDE SEQUENCE [LARGE SCALE GENOMIC DNA]</scope>
    <source>
        <strain>97-27</strain>
    </source>
</reference>
<name>THIC_BACHK</name>
<evidence type="ECO:0000255" key="1">
    <source>
        <dbReference type="HAMAP-Rule" id="MF_00089"/>
    </source>
</evidence>
<evidence type="ECO:0000256" key="2">
    <source>
        <dbReference type="SAM" id="MobiDB-lite"/>
    </source>
</evidence>
<proteinExistence type="inferred from homology"/>
<dbReference type="EC" id="4.1.99.17" evidence="1"/>
<dbReference type="EMBL" id="AE017355">
    <property type="protein sequence ID" value="AAT63944.1"/>
    <property type="molecule type" value="Genomic_DNA"/>
</dbReference>
<dbReference type="RefSeq" id="WP_000814466.1">
    <property type="nucleotide sequence ID" value="NC_005957.1"/>
</dbReference>
<dbReference type="RefSeq" id="YP_039217.1">
    <property type="nucleotide sequence ID" value="NC_005957.1"/>
</dbReference>
<dbReference type="SMR" id="Q6HB59"/>
<dbReference type="KEGG" id="btk:BT9727_4908"/>
<dbReference type="PATRIC" id="fig|281309.8.peg.5221"/>
<dbReference type="HOGENOM" id="CLU_013181_2_1_9"/>
<dbReference type="UniPathway" id="UPA00060"/>
<dbReference type="Proteomes" id="UP000001301">
    <property type="component" value="Chromosome"/>
</dbReference>
<dbReference type="GO" id="GO:0005829">
    <property type="term" value="C:cytosol"/>
    <property type="evidence" value="ECO:0007669"/>
    <property type="project" value="TreeGrafter"/>
</dbReference>
<dbReference type="GO" id="GO:0051539">
    <property type="term" value="F:4 iron, 4 sulfur cluster binding"/>
    <property type="evidence" value="ECO:0007669"/>
    <property type="project" value="UniProtKB-KW"/>
</dbReference>
<dbReference type="GO" id="GO:0016830">
    <property type="term" value="F:carbon-carbon lyase activity"/>
    <property type="evidence" value="ECO:0007669"/>
    <property type="project" value="InterPro"/>
</dbReference>
<dbReference type="GO" id="GO:0008270">
    <property type="term" value="F:zinc ion binding"/>
    <property type="evidence" value="ECO:0007669"/>
    <property type="project" value="UniProtKB-UniRule"/>
</dbReference>
<dbReference type="GO" id="GO:0009228">
    <property type="term" value="P:thiamine biosynthetic process"/>
    <property type="evidence" value="ECO:0007669"/>
    <property type="project" value="UniProtKB-KW"/>
</dbReference>
<dbReference type="GO" id="GO:0009229">
    <property type="term" value="P:thiamine diphosphate biosynthetic process"/>
    <property type="evidence" value="ECO:0007669"/>
    <property type="project" value="UniProtKB-UniRule"/>
</dbReference>
<dbReference type="FunFam" id="3.20.20.540:FF:000001">
    <property type="entry name" value="Phosphomethylpyrimidine synthase"/>
    <property type="match status" value="1"/>
</dbReference>
<dbReference type="Gene3D" id="6.10.250.620">
    <property type="match status" value="1"/>
</dbReference>
<dbReference type="Gene3D" id="3.20.20.540">
    <property type="entry name" value="Radical SAM ThiC family, central domain"/>
    <property type="match status" value="1"/>
</dbReference>
<dbReference type="HAMAP" id="MF_00089">
    <property type="entry name" value="ThiC"/>
    <property type="match status" value="1"/>
</dbReference>
<dbReference type="InterPro" id="IPR037509">
    <property type="entry name" value="ThiC"/>
</dbReference>
<dbReference type="InterPro" id="IPR025747">
    <property type="entry name" value="ThiC-associated_dom"/>
</dbReference>
<dbReference type="InterPro" id="IPR038521">
    <property type="entry name" value="ThiC/Bza_core_dom"/>
</dbReference>
<dbReference type="InterPro" id="IPR002817">
    <property type="entry name" value="ThiC/BzaA/B"/>
</dbReference>
<dbReference type="NCBIfam" id="NF006763">
    <property type="entry name" value="PRK09284.1"/>
    <property type="match status" value="1"/>
</dbReference>
<dbReference type="NCBIfam" id="NF009895">
    <property type="entry name" value="PRK13352.1"/>
    <property type="match status" value="1"/>
</dbReference>
<dbReference type="NCBIfam" id="TIGR00190">
    <property type="entry name" value="thiC"/>
    <property type="match status" value="1"/>
</dbReference>
<dbReference type="PANTHER" id="PTHR30557:SF1">
    <property type="entry name" value="PHOSPHOMETHYLPYRIMIDINE SYNTHASE, CHLOROPLASTIC"/>
    <property type="match status" value="1"/>
</dbReference>
<dbReference type="PANTHER" id="PTHR30557">
    <property type="entry name" value="THIAMINE BIOSYNTHESIS PROTEIN THIC"/>
    <property type="match status" value="1"/>
</dbReference>
<dbReference type="Pfam" id="PF13667">
    <property type="entry name" value="ThiC-associated"/>
    <property type="match status" value="1"/>
</dbReference>
<dbReference type="Pfam" id="PF01964">
    <property type="entry name" value="ThiC_Rad_SAM"/>
    <property type="match status" value="1"/>
</dbReference>
<dbReference type="SFLD" id="SFLDF00407">
    <property type="entry name" value="phosphomethylpyrimidine_syntha"/>
    <property type="match status" value="1"/>
</dbReference>
<dbReference type="SFLD" id="SFLDG01114">
    <property type="entry name" value="phosphomethylpyrimidine_syntha"/>
    <property type="match status" value="1"/>
</dbReference>
<dbReference type="SFLD" id="SFLDS00113">
    <property type="entry name" value="Radical_SAM_Phosphomethylpyrim"/>
    <property type="match status" value="1"/>
</dbReference>
<protein>
    <recommendedName>
        <fullName evidence="1">Phosphomethylpyrimidine synthase</fullName>
        <ecNumber evidence="1">4.1.99.17</ecNumber>
    </recommendedName>
    <alternativeName>
        <fullName evidence="1">Hydroxymethylpyrimidine phosphate synthase</fullName>
        <shortName evidence="1">HMP-P synthase</shortName>
        <shortName evidence="1">HMP-phosphate synthase</shortName>
        <shortName evidence="1">HMPP synthase</shortName>
    </alternativeName>
    <alternativeName>
        <fullName evidence="1">Thiamine biosynthesis protein ThiC</fullName>
    </alternativeName>
</protein>
<keyword id="KW-0004">4Fe-4S</keyword>
<keyword id="KW-0408">Iron</keyword>
<keyword id="KW-0411">Iron-sulfur</keyword>
<keyword id="KW-0456">Lyase</keyword>
<keyword id="KW-0479">Metal-binding</keyword>
<keyword id="KW-0949">S-adenosyl-L-methionine</keyword>
<keyword id="KW-0784">Thiamine biosynthesis</keyword>
<keyword id="KW-0862">Zinc</keyword>
<gene>
    <name evidence="1" type="primary">thiC</name>
    <name type="ordered locus">BT9727_4908</name>
</gene>
<sequence length="586" mass="65771">MKQSVSAEQIELKSSLPGSKKVYVDGPREGMKVPMREIEQSDTNGVPNPPIRVYDTSGPYTDPAYKVELEKGIPTPRHSWILERGDVEAYEGREVKPEDDGVKVASKHTPVFPQMDRKPLRAKQGANVTQMHYARNGIITSEMEYVAIREGVDPEFVRKEIAEGRAILPANINHPEAEPMIIGRNFHVKVNANIGNSAVSSSIAEEVEKMTWATRWGADTIMDLSTGKNIHTTREWIIRNAPVPVGTVPIYQALEKVNGIAEDLTWEVYRDTLIEQAEQGVDYFTIHAGVLLRYIPITAKRTTGIVSRGGSIMAQWCLFHHKENFLYTHFEEICEIMKQYDVSFSLGDGLRPGSIADANDEAQFSELETLGELTKIAWKHDVQVMIEGPGHVPMHLIKENMEKELDICQGAPFYTLGPLTTDIAPGYDHITSAIGAAMIGWFGTAMLCYVTPKEHLGLPNKDDVREGVITYKIAAHAADLAKGHKTAHQRDDALSKARFEFRWRDQFNLSLDPERAMEYHDETLPAEGAKTAHFCSMCGPKFCSMRISHDIREYAKENDLETTEAIEKGMKEKAKEFKETGSHLYQ</sequence>
<organism>
    <name type="scientific">Bacillus thuringiensis subsp. konkukian (strain 97-27)</name>
    <dbReference type="NCBI Taxonomy" id="281309"/>
    <lineage>
        <taxon>Bacteria</taxon>
        <taxon>Bacillati</taxon>
        <taxon>Bacillota</taxon>
        <taxon>Bacilli</taxon>
        <taxon>Bacillales</taxon>
        <taxon>Bacillaceae</taxon>
        <taxon>Bacillus</taxon>
        <taxon>Bacillus cereus group</taxon>
    </lineage>
</organism>
<feature type="chain" id="PRO_0000242239" description="Phosphomethylpyrimidine synthase">
    <location>
        <begin position="1"/>
        <end position="586"/>
    </location>
</feature>
<feature type="region of interest" description="Disordered" evidence="2">
    <location>
        <begin position="1"/>
        <end position="59"/>
    </location>
</feature>
<feature type="compositionally biased region" description="Basic and acidic residues" evidence="2">
    <location>
        <begin position="22"/>
        <end position="39"/>
    </location>
</feature>
<feature type="binding site" evidence="1">
    <location>
        <position position="193"/>
    </location>
    <ligand>
        <name>substrate</name>
    </ligand>
</feature>
<feature type="binding site" evidence="1">
    <location>
        <position position="222"/>
    </location>
    <ligand>
        <name>substrate</name>
    </ligand>
</feature>
<feature type="binding site" evidence="1">
    <location>
        <position position="251"/>
    </location>
    <ligand>
        <name>substrate</name>
    </ligand>
</feature>
<feature type="binding site" evidence="1">
    <location>
        <position position="287"/>
    </location>
    <ligand>
        <name>substrate</name>
    </ligand>
</feature>
<feature type="binding site" evidence="1">
    <location>
        <begin position="307"/>
        <end position="309"/>
    </location>
    <ligand>
        <name>substrate</name>
    </ligand>
</feature>
<feature type="binding site" evidence="1">
    <location>
        <begin position="348"/>
        <end position="351"/>
    </location>
    <ligand>
        <name>substrate</name>
    </ligand>
</feature>
<feature type="binding site" evidence="1">
    <location>
        <position position="387"/>
    </location>
    <ligand>
        <name>substrate</name>
    </ligand>
</feature>
<feature type="binding site" evidence="1">
    <location>
        <position position="391"/>
    </location>
    <ligand>
        <name>Zn(2+)</name>
        <dbReference type="ChEBI" id="CHEBI:29105"/>
    </ligand>
</feature>
<feature type="binding site" evidence="1">
    <location>
        <position position="414"/>
    </location>
    <ligand>
        <name>substrate</name>
    </ligand>
</feature>
<feature type="binding site" evidence="1">
    <location>
        <position position="455"/>
    </location>
    <ligand>
        <name>Zn(2+)</name>
        <dbReference type="ChEBI" id="CHEBI:29105"/>
    </ligand>
</feature>
<feature type="binding site" evidence="1">
    <location>
        <position position="535"/>
    </location>
    <ligand>
        <name>[4Fe-4S] cluster</name>
        <dbReference type="ChEBI" id="CHEBI:49883"/>
        <note>4Fe-4S-S-AdoMet</note>
    </ligand>
</feature>
<feature type="binding site" evidence="1">
    <location>
        <position position="538"/>
    </location>
    <ligand>
        <name>[4Fe-4S] cluster</name>
        <dbReference type="ChEBI" id="CHEBI:49883"/>
        <note>4Fe-4S-S-AdoMet</note>
    </ligand>
</feature>
<feature type="binding site" evidence="1">
    <location>
        <position position="543"/>
    </location>
    <ligand>
        <name>[4Fe-4S] cluster</name>
        <dbReference type="ChEBI" id="CHEBI:49883"/>
        <note>4Fe-4S-S-AdoMet</note>
    </ligand>
</feature>